<keyword id="KW-0963">Cytoplasm</keyword>
<keyword id="KW-0238">DNA-binding</keyword>
<keyword id="KW-0804">Transcription</keyword>
<keyword id="KW-0805">Transcription regulation</keyword>
<feature type="chain" id="PRO_0000257105" description="Probable transcriptional regulatory protein PSPPH_3775">
    <location>
        <begin position="1"/>
        <end position="248"/>
    </location>
</feature>
<evidence type="ECO:0000255" key="1">
    <source>
        <dbReference type="HAMAP-Rule" id="MF_00693"/>
    </source>
</evidence>
<gene>
    <name type="ordered locus">PSPPH_3775</name>
</gene>
<reference key="1">
    <citation type="journal article" date="2005" name="J. Bacteriol.">
        <title>Whole-genome sequence analysis of Pseudomonas syringae pv. phaseolicola 1448A reveals divergence among pathovars in genes involved in virulence and transposition.</title>
        <authorList>
            <person name="Joardar V."/>
            <person name="Lindeberg M."/>
            <person name="Jackson R.W."/>
            <person name="Selengut J."/>
            <person name="Dodson R."/>
            <person name="Brinkac L.M."/>
            <person name="Daugherty S.C."/>
            <person name="DeBoy R.T."/>
            <person name="Durkin A.S."/>
            <person name="Gwinn Giglio M."/>
            <person name="Madupu R."/>
            <person name="Nelson W.C."/>
            <person name="Rosovitz M.J."/>
            <person name="Sullivan S.A."/>
            <person name="Crabtree J."/>
            <person name="Creasy T."/>
            <person name="Davidsen T.M."/>
            <person name="Haft D.H."/>
            <person name="Zafar N."/>
            <person name="Zhou L."/>
            <person name="Halpin R."/>
            <person name="Holley T."/>
            <person name="Khouri H.M."/>
            <person name="Feldblyum T.V."/>
            <person name="White O."/>
            <person name="Fraser C.M."/>
            <person name="Chatterjee A.K."/>
            <person name="Cartinhour S."/>
            <person name="Schneider D."/>
            <person name="Mansfield J.W."/>
            <person name="Collmer A."/>
            <person name="Buell R."/>
        </authorList>
    </citation>
    <scope>NUCLEOTIDE SEQUENCE [LARGE SCALE GENOMIC DNA]</scope>
    <source>
        <strain>1448A / Race 6</strain>
    </source>
</reference>
<proteinExistence type="inferred from homology"/>
<protein>
    <recommendedName>
        <fullName evidence="1">Probable transcriptional regulatory protein PSPPH_3775</fullName>
    </recommendedName>
</protein>
<dbReference type="EMBL" id="CP000058">
    <property type="protein sequence ID" value="AAZ35856.1"/>
    <property type="molecule type" value="Genomic_DNA"/>
</dbReference>
<dbReference type="RefSeq" id="WP_004657903.1">
    <property type="nucleotide sequence ID" value="NC_005773.3"/>
</dbReference>
<dbReference type="SMR" id="Q48FC2"/>
<dbReference type="KEGG" id="psp:PSPPH_3775"/>
<dbReference type="eggNOG" id="COG0217">
    <property type="taxonomic scope" value="Bacteria"/>
</dbReference>
<dbReference type="HOGENOM" id="CLU_062974_2_2_6"/>
<dbReference type="Proteomes" id="UP000000551">
    <property type="component" value="Chromosome"/>
</dbReference>
<dbReference type="GO" id="GO:0005829">
    <property type="term" value="C:cytosol"/>
    <property type="evidence" value="ECO:0007669"/>
    <property type="project" value="TreeGrafter"/>
</dbReference>
<dbReference type="GO" id="GO:0003677">
    <property type="term" value="F:DNA binding"/>
    <property type="evidence" value="ECO:0007669"/>
    <property type="project" value="UniProtKB-UniRule"/>
</dbReference>
<dbReference type="GO" id="GO:0006355">
    <property type="term" value="P:regulation of DNA-templated transcription"/>
    <property type="evidence" value="ECO:0007669"/>
    <property type="project" value="UniProtKB-UniRule"/>
</dbReference>
<dbReference type="FunFam" id="1.10.10.200:FF:000001">
    <property type="entry name" value="Probable transcriptional regulatory protein YebC"/>
    <property type="match status" value="1"/>
</dbReference>
<dbReference type="FunFam" id="3.30.70.980:FF:000002">
    <property type="entry name" value="Probable transcriptional regulatory protein YebC"/>
    <property type="match status" value="1"/>
</dbReference>
<dbReference type="Gene3D" id="1.10.10.200">
    <property type="match status" value="1"/>
</dbReference>
<dbReference type="Gene3D" id="3.30.70.980">
    <property type="match status" value="2"/>
</dbReference>
<dbReference type="HAMAP" id="MF_00693">
    <property type="entry name" value="Transcrip_reg_TACO1"/>
    <property type="match status" value="1"/>
</dbReference>
<dbReference type="InterPro" id="IPR017856">
    <property type="entry name" value="Integrase-like_N"/>
</dbReference>
<dbReference type="InterPro" id="IPR048300">
    <property type="entry name" value="TACO1_YebC-like_2nd/3rd_dom"/>
</dbReference>
<dbReference type="InterPro" id="IPR049083">
    <property type="entry name" value="TACO1_YebC_N"/>
</dbReference>
<dbReference type="InterPro" id="IPR002876">
    <property type="entry name" value="Transcrip_reg_TACO1-like"/>
</dbReference>
<dbReference type="InterPro" id="IPR026564">
    <property type="entry name" value="Transcrip_reg_TACO1-like_dom3"/>
</dbReference>
<dbReference type="InterPro" id="IPR029072">
    <property type="entry name" value="YebC-like"/>
</dbReference>
<dbReference type="NCBIfam" id="NF001030">
    <property type="entry name" value="PRK00110.1"/>
    <property type="match status" value="1"/>
</dbReference>
<dbReference type="NCBIfam" id="NF009044">
    <property type="entry name" value="PRK12378.1"/>
    <property type="match status" value="1"/>
</dbReference>
<dbReference type="NCBIfam" id="TIGR01033">
    <property type="entry name" value="YebC/PmpR family DNA-binding transcriptional regulator"/>
    <property type="match status" value="1"/>
</dbReference>
<dbReference type="PANTHER" id="PTHR12532:SF6">
    <property type="entry name" value="TRANSCRIPTIONAL REGULATORY PROTEIN YEBC-RELATED"/>
    <property type="match status" value="1"/>
</dbReference>
<dbReference type="PANTHER" id="PTHR12532">
    <property type="entry name" value="TRANSLATIONAL ACTIVATOR OF CYTOCHROME C OXIDASE 1"/>
    <property type="match status" value="1"/>
</dbReference>
<dbReference type="Pfam" id="PF20772">
    <property type="entry name" value="TACO1_YebC_N"/>
    <property type="match status" value="1"/>
</dbReference>
<dbReference type="Pfam" id="PF01709">
    <property type="entry name" value="Transcrip_reg"/>
    <property type="match status" value="1"/>
</dbReference>
<dbReference type="SUPFAM" id="SSF75625">
    <property type="entry name" value="YebC-like"/>
    <property type="match status" value="1"/>
</dbReference>
<accession>Q48FC2</accession>
<comment type="subcellular location">
    <subcellularLocation>
        <location evidence="1">Cytoplasm</location>
    </subcellularLocation>
</comment>
<comment type="similarity">
    <text evidence="1">Belongs to the TACO1 family.</text>
</comment>
<organism>
    <name type="scientific">Pseudomonas savastanoi pv. phaseolicola (strain 1448A / Race 6)</name>
    <name type="common">Pseudomonas syringae pv. phaseolicola (strain 1448A / Race 6)</name>
    <dbReference type="NCBI Taxonomy" id="264730"/>
    <lineage>
        <taxon>Bacteria</taxon>
        <taxon>Pseudomonadati</taxon>
        <taxon>Pseudomonadota</taxon>
        <taxon>Gammaproteobacteria</taxon>
        <taxon>Pseudomonadales</taxon>
        <taxon>Pseudomonadaceae</taxon>
        <taxon>Pseudomonas</taxon>
    </lineage>
</organism>
<name>Y3775_PSE14</name>
<sequence length="248" mass="26552">MAGHSKWANIKHRKERQDAKKGKIFTKWIRELTVAARQGGGDPGSNPRLRLALDKALGANMTRDTIDRAVARGVGASDGDDVEELGYEGYGPGGVAIMVETMTDNRNRTAAAVRHAFTKCGGNLGTDGSVAYLFDRKGQISFAAGVDEDALIEAAMEADADDVVTNDDGSIDVFTSFSGFYAVRNALEAAGFKASDAEIVMLPTTSAVLDLETAEKVLKLIDMLEDLDDVQNVYSNAEIPDDVMEQLG</sequence>